<comment type="function">
    <text evidence="1">Prenyltransferase that catalyzes in vivo the transfer of the heptaprenyl moiety of heptaprenyl pyrophosphate (HepPP; 35 carbon atoms) to the C3 hydroxyl of sn-glycerol-1-phosphate (G1P), producing heptaprenylglyceryl phosphate (HepGP). This reaction is an ether-bond-formation step in the biosynthesis of archaea-type G1P-based membrane lipids found in Bacillales.</text>
</comment>
<comment type="catalytic activity">
    <reaction evidence="1">
        <text>sn-glycerol 1-phosphate + all-trans-heptaprenyl diphosphate = 3-heptaprenyl-sn-glycero-1-phosphate + diphosphate</text>
        <dbReference type="Rhea" id="RHEA:33495"/>
        <dbReference type="ChEBI" id="CHEBI:33019"/>
        <dbReference type="ChEBI" id="CHEBI:57685"/>
        <dbReference type="ChEBI" id="CHEBI:58206"/>
        <dbReference type="ChEBI" id="CHEBI:64781"/>
        <dbReference type="EC" id="2.5.1.n9"/>
    </reaction>
</comment>
<comment type="cofactor">
    <cofactor evidence="1">
        <name>Mg(2+)</name>
        <dbReference type="ChEBI" id="CHEBI:18420"/>
    </cofactor>
</comment>
<comment type="pathway">
    <text evidence="1">Membrane lipid metabolism; glycerophospholipid metabolism.</text>
</comment>
<comment type="subunit">
    <text evidence="1">Homodimer.</text>
</comment>
<comment type="similarity">
    <text evidence="1">Belongs to the GGGP/HepGP synthase family. Group I subfamily.</text>
</comment>
<dbReference type="EC" id="2.5.1.n9" evidence="1"/>
<dbReference type="EMBL" id="CP001177">
    <property type="protein sequence ID" value="ACJ81995.1"/>
    <property type="molecule type" value="Genomic_DNA"/>
</dbReference>
<dbReference type="SMR" id="B7HSW3"/>
<dbReference type="KEGG" id="bcr:BCAH187_A0376"/>
<dbReference type="HOGENOM" id="CLU_095211_0_0_9"/>
<dbReference type="UniPathway" id="UPA00940"/>
<dbReference type="Proteomes" id="UP000002214">
    <property type="component" value="Chromosome"/>
</dbReference>
<dbReference type="GO" id="GO:0120536">
    <property type="term" value="F:heptaprenylglyceryl phosphate synthase activity"/>
    <property type="evidence" value="ECO:0007669"/>
    <property type="project" value="RHEA"/>
</dbReference>
<dbReference type="GO" id="GO:0000287">
    <property type="term" value="F:magnesium ion binding"/>
    <property type="evidence" value="ECO:0007669"/>
    <property type="project" value="UniProtKB-UniRule"/>
</dbReference>
<dbReference type="GO" id="GO:0046474">
    <property type="term" value="P:glycerophospholipid biosynthetic process"/>
    <property type="evidence" value="ECO:0007669"/>
    <property type="project" value="UniProtKB-UniRule"/>
</dbReference>
<dbReference type="CDD" id="cd02812">
    <property type="entry name" value="PcrB_like"/>
    <property type="match status" value="1"/>
</dbReference>
<dbReference type="FunFam" id="3.20.20.390:FF:000001">
    <property type="entry name" value="Heptaprenylglyceryl phosphate synthase"/>
    <property type="match status" value="1"/>
</dbReference>
<dbReference type="Gene3D" id="3.20.20.390">
    <property type="entry name" value="FMN-linked oxidoreductases"/>
    <property type="match status" value="1"/>
</dbReference>
<dbReference type="HAMAP" id="MF_00112">
    <property type="entry name" value="GGGP_HepGP_synthase"/>
    <property type="match status" value="1"/>
</dbReference>
<dbReference type="InterPro" id="IPR039074">
    <property type="entry name" value="GGGP/HepGP_synthase_I"/>
</dbReference>
<dbReference type="InterPro" id="IPR038597">
    <property type="entry name" value="GGGP/HepGP_synthase_sf"/>
</dbReference>
<dbReference type="InterPro" id="IPR008205">
    <property type="entry name" value="GGGP_HepGP_synthase"/>
</dbReference>
<dbReference type="NCBIfam" id="TIGR01768">
    <property type="entry name" value="GGGP-family"/>
    <property type="match status" value="1"/>
</dbReference>
<dbReference type="NCBIfam" id="NF003197">
    <property type="entry name" value="PRK04169.1-1"/>
    <property type="match status" value="1"/>
</dbReference>
<dbReference type="NCBIfam" id="NF003199">
    <property type="entry name" value="PRK04169.1-3"/>
    <property type="match status" value="1"/>
</dbReference>
<dbReference type="PANTHER" id="PTHR40029">
    <property type="match status" value="1"/>
</dbReference>
<dbReference type="PANTHER" id="PTHR40029:SF2">
    <property type="entry name" value="HEPTAPRENYLGLYCERYL PHOSPHATE SYNTHASE"/>
    <property type="match status" value="1"/>
</dbReference>
<dbReference type="Pfam" id="PF01884">
    <property type="entry name" value="PcrB"/>
    <property type="match status" value="1"/>
</dbReference>
<dbReference type="SUPFAM" id="SSF51395">
    <property type="entry name" value="FMN-linked oxidoreductases"/>
    <property type="match status" value="1"/>
</dbReference>
<sequence>MYDISGWKHVFKLDPNKELSDEHLEMICESGTDAVIVGGSDGVTIDNVLHMLVSIRRYAVPCVLEVSNVEAITPGFDFYYIPSVLNSRKVEWVTGVHHEALKEFGDIMDWDEIFMEGYCVLNPEAKVAQLTDAKCDVTEDDVIAYARLADKLLRLPIFYLEYSGTYGDVELVKNVKAQLKQAKLYYGGGISNAEQAKEMAQHADTVVVGNIIYDDIKAALKTVKAVKGE</sequence>
<gene>
    <name evidence="1" type="primary">pcrB</name>
    <name type="ordered locus">BCAH187_A0376</name>
</gene>
<protein>
    <recommendedName>
        <fullName evidence="1">Heptaprenylglyceryl phosphate synthase</fullName>
        <shortName evidence="1">HepGP synthase</shortName>
        <ecNumber evidence="1">2.5.1.n9</ecNumber>
    </recommendedName>
    <alternativeName>
        <fullName evidence="1">Glycerol-1-phosphate heptaprenyltransferase</fullName>
    </alternativeName>
</protein>
<organism>
    <name type="scientific">Bacillus cereus (strain AH187)</name>
    <dbReference type="NCBI Taxonomy" id="405534"/>
    <lineage>
        <taxon>Bacteria</taxon>
        <taxon>Bacillati</taxon>
        <taxon>Bacillota</taxon>
        <taxon>Bacilli</taxon>
        <taxon>Bacillales</taxon>
        <taxon>Bacillaceae</taxon>
        <taxon>Bacillus</taxon>
        <taxon>Bacillus cereus group</taxon>
    </lineage>
</organism>
<feature type="chain" id="PRO_1000117518" description="Heptaprenylglyceryl phosphate synthase">
    <location>
        <begin position="1"/>
        <end position="229"/>
    </location>
</feature>
<feature type="binding site" evidence="1">
    <location>
        <position position="12"/>
    </location>
    <ligand>
        <name>sn-glycerol 1-phosphate</name>
        <dbReference type="ChEBI" id="CHEBI:57685"/>
    </ligand>
</feature>
<feature type="binding site" evidence="1">
    <location>
        <position position="14"/>
    </location>
    <ligand>
        <name>Mg(2+)</name>
        <dbReference type="ChEBI" id="CHEBI:18420"/>
    </ligand>
</feature>
<feature type="binding site" evidence="1">
    <location>
        <position position="40"/>
    </location>
    <ligand>
        <name>Mg(2+)</name>
        <dbReference type="ChEBI" id="CHEBI:18420"/>
    </ligand>
</feature>
<feature type="binding site" evidence="1">
    <location>
        <begin position="159"/>
        <end position="164"/>
    </location>
    <ligand>
        <name>sn-glycerol 1-phosphate</name>
        <dbReference type="ChEBI" id="CHEBI:57685"/>
    </ligand>
</feature>
<feature type="binding site" evidence="1">
    <location>
        <position position="189"/>
    </location>
    <ligand>
        <name>sn-glycerol 1-phosphate</name>
        <dbReference type="ChEBI" id="CHEBI:57685"/>
    </ligand>
</feature>
<feature type="binding site" evidence="1">
    <location>
        <begin position="209"/>
        <end position="210"/>
    </location>
    <ligand>
        <name>sn-glycerol 1-phosphate</name>
        <dbReference type="ChEBI" id="CHEBI:57685"/>
    </ligand>
</feature>
<accession>B7HSW3</accession>
<reference key="1">
    <citation type="submission" date="2008-10" db="EMBL/GenBank/DDBJ databases">
        <title>Genome sequence of Bacillus cereus AH187.</title>
        <authorList>
            <person name="Dodson R.J."/>
            <person name="Durkin A.S."/>
            <person name="Rosovitz M.J."/>
            <person name="Rasko D.A."/>
            <person name="Kolsto A.B."/>
            <person name="Okstad O.A."/>
            <person name="Ravel J."/>
            <person name="Sutton G."/>
        </authorList>
    </citation>
    <scope>NUCLEOTIDE SEQUENCE [LARGE SCALE GENOMIC DNA]</scope>
    <source>
        <strain>AH187</strain>
    </source>
</reference>
<keyword id="KW-0444">Lipid biosynthesis</keyword>
<keyword id="KW-0443">Lipid metabolism</keyword>
<keyword id="KW-0460">Magnesium</keyword>
<keyword id="KW-0479">Metal-binding</keyword>
<keyword id="KW-0594">Phospholipid biosynthesis</keyword>
<keyword id="KW-1208">Phospholipid metabolism</keyword>
<keyword id="KW-0808">Transferase</keyword>
<proteinExistence type="inferred from homology"/>
<name>PCRB_BACC7</name>
<evidence type="ECO:0000255" key="1">
    <source>
        <dbReference type="HAMAP-Rule" id="MF_00112"/>
    </source>
</evidence>